<dbReference type="EMBL" id="BA000003">
    <property type="protein sequence ID" value="BAB12731.1"/>
    <property type="molecule type" value="Genomic_DNA"/>
</dbReference>
<dbReference type="RefSeq" id="NP_239845.1">
    <property type="nucleotide sequence ID" value="NC_002528.1"/>
</dbReference>
<dbReference type="RefSeq" id="WP_009873965.1">
    <property type="nucleotide sequence ID" value="NZ_AP036055.1"/>
</dbReference>
<dbReference type="SMR" id="P57119"/>
<dbReference type="STRING" id="563178.BUAP5A_003"/>
<dbReference type="EnsemblBacteria" id="BAB12731">
    <property type="protein sequence ID" value="BAB12731"/>
    <property type="gene ID" value="BAB12731"/>
</dbReference>
<dbReference type="KEGG" id="buc:BU003"/>
<dbReference type="PATRIC" id="fig|107806.10.peg.16"/>
<dbReference type="eggNOG" id="ENOG5032S3K">
    <property type="taxonomic scope" value="Bacteria"/>
</dbReference>
<dbReference type="HOGENOM" id="CLU_148047_1_0_6"/>
<dbReference type="Proteomes" id="UP000001806">
    <property type="component" value="Chromosome"/>
</dbReference>
<dbReference type="GO" id="GO:0005886">
    <property type="term" value="C:plasma membrane"/>
    <property type="evidence" value="ECO:0007669"/>
    <property type="project" value="UniProtKB-SubCell"/>
</dbReference>
<dbReference type="GO" id="GO:0045259">
    <property type="term" value="C:proton-transporting ATP synthase complex"/>
    <property type="evidence" value="ECO:0007669"/>
    <property type="project" value="UniProtKB-KW"/>
</dbReference>
<dbReference type="GO" id="GO:0033177">
    <property type="term" value="C:proton-transporting two-sector ATPase complex, proton-transporting domain"/>
    <property type="evidence" value="ECO:0007669"/>
    <property type="project" value="InterPro"/>
</dbReference>
<dbReference type="GO" id="GO:0008289">
    <property type="term" value="F:lipid binding"/>
    <property type="evidence" value="ECO:0007669"/>
    <property type="project" value="UniProtKB-KW"/>
</dbReference>
<dbReference type="GO" id="GO:0046933">
    <property type="term" value="F:proton-transporting ATP synthase activity, rotational mechanism"/>
    <property type="evidence" value="ECO:0007669"/>
    <property type="project" value="UniProtKB-UniRule"/>
</dbReference>
<dbReference type="CDD" id="cd18185">
    <property type="entry name" value="ATP-synt_Fo_c_ATPE"/>
    <property type="match status" value="1"/>
</dbReference>
<dbReference type="FunFam" id="1.20.20.10:FF:000002">
    <property type="entry name" value="ATP synthase subunit c"/>
    <property type="match status" value="1"/>
</dbReference>
<dbReference type="Gene3D" id="1.20.20.10">
    <property type="entry name" value="F1F0 ATP synthase subunit C"/>
    <property type="match status" value="1"/>
</dbReference>
<dbReference type="HAMAP" id="MF_01396">
    <property type="entry name" value="ATP_synth_c_bact"/>
    <property type="match status" value="1"/>
</dbReference>
<dbReference type="InterPro" id="IPR005953">
    <property type="entry name" value="ATP_synth_csu_bac/chlpt"/>
</dbReference>
<dbReference type="InterPro" id="IPR000454">
    <property type="entry name" value="ATP_synth_F0_csu"/>
</dbReference>
<dbReference type="InterPro" id="IPR020537">
    <property type="entry name" value="ATP_synth_F0_csu_DDCD_BS"/>
</dbReference>
<dbReference type="InterPro" id="IPR038662">
    <property type="entry name" value="ATP_synth_F0_csu_sf"/>
</dbReference>
<dbReference type="InterPro" id="IPR002379">
    <property type="entry name" value="ATPase_proteolipid_c-like_dom"/>
</dbReference>
<dbReference type="InterPro" id="IPR035921">
    <property type="entry name" value="F/V-ATP_Csub_sf"/>
</dbReference>
<dbReference type="NCBIfam" id="TIGR01260">
    <property type="entry name" value="ATP_synt_c"/>
    <property type="match status" value="1"/>
</dbReference>
<dbReference type="NCBIfam" id="NF005363">
    <property type="entry name" value="PRK06876.1"/>
    <property type="match status" value="1"/>
</dbReference>
<dbReference type="Pfam" id="PF00137">
    <property type="entry name" value="ATP-synt_C"/>
    <property type="match status" value="1"/>
</dbReference>
<dbReference type="PRINTS" id="PR00124">
    <property type="entry name" value="ATPASEC"/>
</dbReference>
<dbReference type="SUPFAM" id="SSF81333">
    <property type="entry name" value="F1F0 ATP synthase subunit C"/>
    <property type="match status" value="1"/>
</dbReference>
<dbReference type="PROSITE" id="PS00605">
    <property type="entry name" value="ATPASE_C"/>
    <property type="match status" value="1"/>
</dbReference>
<feature type="chain" id="PRO_0000112140" description="ATP synthase subunit c">
    <location>
        <begin position="1"/>
        <end position="79"/>
    </location>
</feature>
<feature type="transmembrane region" description="Helical" evidence="1">
    <location>
        <begin position="11"/>
        <end position="31"/>
    </location>
</feature>
<feature type="transmembrane region" description="Helical" evidence="1">
    <location>
        <begin position="53"/>
        <end position="73"/>
    </location>
</feature>
<feature type="site" description="Reversibly protonated during proton transport" evidence="1">
    <location>
        <position position="61"/>
    </location>
</feature>
<evidence type="ECO:0000255" key="1">
    <source>
        <dbReference type="HAMAP-Rule" id="MF_01396"/>
    </source>
</evidence>
<reference key="1">
    <citation type="journal article" date="2000" name="Nature">
        <title>Genome sequence of the endocellular bacterial symbiont of aphids Buchnera sp. APS.</title>
        <authorList>
            <person name="Shigenobu S."/>
            <person name="Watanabe H."/>
            <person name="Hattori M."/>
            <person name="Sakaki Y."/>
            <person name="Ishikawa H."/>
        </authorList>
    </citation>
    <scope>NUCLEOTIDE SEQUENCE [LARGE SCALE GENOMIC DNA]</scope>
    <source>
        <strain>APS</strain>
    </source>
</reference>
<name>ATPL_BUCAI</name>
<gene>
    <name evidence="1" type="primary">atpE</name>
    <name type="ordered locus">BU003</name>
</gene>
<sequence length="79" mass="8266">MENLNVDMLYIAVAIMVGLASIGAAIGIGILGGKFLEGAARQPDLVPLLRTQFFVVMGLVDAIPMIAVGLGLYMLFAIS</sequence>
<keyword id="KW-0066">ATP synthesis</keyword>
<keyword id="KW-1003">Cell membrane</keyword>
<keyword id="KW-0138">CF(0)</keyword>
<keyword id="KW-0375">Hydrogen ion transport</keyword>
<keyword id="KW-0406">Ion transport</keyword>
<keyword id="KW-0446">Lipid-binding</keyword>
<keyword id="KW-0472">Membrane</keyword>
<keyword id="KW-1185">Reference proteome</keyword>
<keyword id="KW-0812">Transmembrane</keyword>
<keyword id="KW-1133">Transmembrane helix</keyword>
<keyword id="KW-0813">Transport</keyword>
<protein>
    <recommendedName>
        <fullName evidence="1">ATP synthase subunit c</fullName>
    </recommendedName>
    <alternativeName>
        <fullName evidence="1">ATP synthase F(0) sector subunit c</fullName>
    </alternativeName>
    <alternativeName>
        <fullName evidence="1">F-type ATPase subunit c</fullName>
        <shortName evidence="1">F-ATPase subunit c</shortName>
    </alternativeName>
    <alternativeName>
        <fullName evidence="1">Lipid-binding protein</fullName>
    </alternativeName>
</protein>
<organism>
    <name type="scientific">Buchnera aphidicola subsp. Acyrthosiphon pisum (strain APS)</name>
    <name type="common">Acyrthosiphon pisum symbiotic bacterium</name>
    <dbReference type="NCBI Taxonomy" id="107806"/>
    <lineage>
        <taxon>Bacteria</taxon>
        <taxon>Pseudomonadati</taxon>
        <taxon>Pseudomonadota</taxon>
        <taxon>Gammaproteobacteria</taxon>
        <taxon>Enterobacterales</taxon>
        <taxon>Erwiniaceae</taxon>
        <taxon>Buchnera</taxon>
    </lineage>
</organism>
<accession>P57119</accession>
<comment type="function">
    <text evidence="1">F(1)F(0) ATP synthase produces ATP from ADP in the presence of a proton or sodium gradient. F-type ATPases consist of two structural domains, F(1) containing the extramembraneous catalytic core and F(0) containing the membrane proton channel, linked together by a central stalk and a peripheral stalk. During catalysis, ATP synthesis in the catalytic domain of F(1) is coupled via a rotary mechanism of the central stalk subunits to proton translocation.</text>
</comment>
<comment type="function">
    <text evidence="1">Key component of the F(0) channel; it plays a direct role in translocation across the membrane. A homomeric c-ring of between 10-14 subunits forms the central stalk rotor element with the F(1) delta and epsilon subunits.</text>
</comment>
<comment type="subunit">
    <text evidence="1">F-type ATPases have 2 components, F(1) - the catalytic core - and F(0) - the membrane proton channel. F(1) has five subunits: alpha(3), beta(3), gamma(1), delta(1), epsilon(1). F(0) has three main subunits: a(1), b(2) and c(10-14). The alpha and beta chains form an alternating ring which encloses part of the gamma chain. F(1) is attached to F(0) by a central stalk formed by the gamma and epsilon chains, while a peripheral stalk is formed by the delta and b chains.</text>
</comment>
<comment type="subcellular location">
    <subcellularLocation>
        <location evidence="1">Cell membrane</location>
        <topology evidence="1">Multi-pass membrane protein</topology>
    </subcellularLocation>
</comment>
<comment type="similarity">
    <text evidence="1">Belongs to the ATPase C chain family.</text>
</comment>
<proteinExistence type="inferred from homology"/>